<keyword id="KW-0997">Cell inner membrane</keyword>
<keyword id="KW-1003">Cell membrane</keyword>
<keyword id="KW-0249">Electron transport</keyword>
<keyword id="KW-0285">Flavoprotein</keyword>
<keyword id="KW-0288">FMN</keyword>
<keyword id="KW-0349">Heme</keyword>
<keyword id="KW-0408">Iron</keyword>
<keyword id="KW-0472">Membrane</keyword>
<keyword id="KW-0479">Metal-binding</keyword>
<keyword id="KW-0812">Transmembrane</keyword>
<keyword id="KW-1133">Transmembrane helix</keyword>
<keyword id="KW-0813">Transport</keyword>
<sequence length="206" mass="23851">MRLSLRHITWLKIAIWLAATLPLLWLVLSINLGGLSADPAKDIQHFTGRMALKLLLATLLVSPLARYSKQPLLLRCRRLLGLWCFAWGTLHLLSYSILELGLSNIGLLGHELINRPYLTLGIISWLVLLALALTSTRWAQRKMGARWQKLHNWVYVVAILAPIHYLWSVKTLSPWPIIYAVMAALLLLLRYKLLLPRYKKFRQWFR</sequence>
<name>MSRQ_YERPY</name>
<gene>
    <name evidence="1" type="primary">msrQ</name>
    <name type="ordered locus">YPK_0461</name>
</gene>
<feature type="chain" id="PRO_1000138752" description="Protein-methionine-sulfoxide reductase heme-binding subunit MsrQ">
    <location>
        <begin position="1"/>
        <end position="206"/>
    </location>
</feature>
<feature type="transmembrane region" description="Helical" evidence="1">
    <location>
        <begin position="13"/>
        <end position="33"/>
    </location>
</feature>
<feature type="transmembrane region" description="Helical" evidence="1">
    <location>
        <begin position="79"/>
        <end position="99"/>
    </location>
</feature>
<feature type="transmembrane region" description="Helical" evidence="1">
    <location>
        <begin position="116"/>
        <end position="136"/>
    </location>
</feature>
<feature type="transmembrane region" description="Helical" evidence="1">
    <location>
        <begin position="147"/>
        <end position="167"/>
    </location>
</feature>
<feature type="transmembrane region" description="Helical" evidence="1">
    <location>
        <begin position="169"/>
        <end position="189"/>
    </location>
</feature>
<protein>
    <recommendedName>
        <fullName evidence="1">Protein-methionine-sulfoxide reductase heme-binding subunit MsrQ</fullName>
    </recommendedName>
    <alternativeName>
        <fullName evidence="1">Flavocytochrome MsrQ</fullName>
    </alternativeName>
</protein>
<reference key="1">
    <citation type="submission" date="2008-02" db="EMBL/GenBank/DDBJ databases">
        <title>Complete sequence of Yersinia pseudotuberculosis YPIII.</title>
        <authorList>
            <consortium name="US DOE Joint Genome Institute"/>
            <person name="Copeland A."/>
            <person name="Lucas S."/>
            <person name="Lapidus A."/>
            <person name="Glavina del Rio T."/>
            <person name="Dalin E."/>
            <person name="Tice H."/>
            <person name="Bruce D."/>
            <person name="Goodwin L."/>
            <person name="Pitluck S."/>
            <person name="Munk A.C."/>
            <person name="Brettin T."/>
            <person name="Detter J.C."/>
            <person name="Han C."/>
            <person name="Tapia R."/>
            <person name="Schmutz J."/>
            <person name="Larimer F."/>
            <person name="Land M."/>
            <person name="Hauser L."/>
            <person name="Challacombe J.F."/>
            <person name="Green L."/>
            <person name="Lindler L.E."/>
            <person name="Nikolich M.P."/>
            <person name="Richardson P."/>
        </authorList>
    </citation>
    <scope>NUCLEOTIDE SEQUENCE [LARGE SCALE GENOMIC DNA]</scope>
    <source>
        <strain>YPIII</strain>
    </source>
</reference>
<accession>B1JKF9</accession>
<dbReference type="EMBL" id="CP000950">
    <property type="protein sequence ID" value="ACA66764.1"/>
    <property type="molecule type" value="Genomic_DNA"/>
</dbReference>
<dbReference type="RefSeq" id="WP_002210072.1">
    <property type="nucleotide sequence ID" value="NZ_CP009792.1"/>
</dbReference>
<dbReference type="SMR" id="B1JKF9"/>
<dbReference type="GeneID" id="57975086"/>
<dbReference type="KEGG" id="ypy:YPK_0461"/>
<dbReference type="PATRIC" id="fig|502800.11.peg.1071"/>
<dbReference type="GO" id="GO:0005886">
    <property type="term" value="C:plasma membrane"/>
    <property type="evidence" value="ECO:0007669"/>
    <property type="project" value="UniProtKB-SubCell"/>
</dbReference>
<dbReference type="GO" id="GO:0009055">
    <property type="term" value="F:electron transfer activity"/>
    <property type="evidence" value="ECO:0007669"/>
    <property type="project" value="UniProtKB-UniRule"/>
</dbReference>
<dbReference type="GO" id="GO:0010181">
    <property type="term" value="F:FMN binding"/>
    <property type="evidence" value="ECO:0007669"/>
    <property type="project" value="UniProtKB-UniRule"/>
</dbReference>
<dbReference type="GO" id="GO:0020037">
    <property type="term" value="F:heme binding"/>
    <property type="evidence" value="ECO:0007669"/>
    <property type="project" value="UniProtKB-UniRule"/>
</dbReference>
<dbReference type="GO" id="GO:0046872">
    <property type="term" value="F:metal ion binding"/>
    <property type="evidence" value="ECO:0007669"/>
    <property type="project" value="UniProtKB-KW"/>
</dbReference>
<dbReference type="GO" id="GO:0016679">
    <property type="term" value="F:oxidoreductase activity, acting on diphenols and related substances as donors"/>
    <property type="evidence" value="ECO:0007669"/>
    <property type="project" value="TreeGrafter"/>
</dbReference>
<dbReference type="GO" id="GO:0030091">
    <property type="term" value="P:protein repair"/>
    <property type="evidence" value="ECO:0007669"/>
    <property type="project" value="UniProtKB-UniRule"/>
</dbReference>
<dbReference type="HAMAP" id="MF_01207">
    <property type="entry name" value="MsrQ"/>
    <property type="match status" value="1"/>
</dbReference>
<dbReference type="InterPro" id="IPR013130">
    <property type="entry name" value="Fe3_Rdtase_TM_dom"/>
</dbReference>
<dbReference type="InterPro" id="IPR022837">
    <property type="entry name" value="MsrQ-like"/>
</dbReference>
<dbReference type="NCBIfam" id="NF003832">
    <property type="entry name" value="PRK05419.1-4"/>
    <property type="match status" value="1"/>
</dbReference>
<dbReference type="PANTHER" id="PTHR36964">
    <property type="entry name" value="PROTEIN-METHIONINE-SULFOXIDE REDUCTASE HEME-BINDING SUBUNIT MSRQ"/>
    <property type="match status" value="1"/>
</dbReference>
<dbReference type="PANTHER" id="PTHR36964:SF1">
    <property type="entry name" value="PROTEIN-METHIONINE-SULFOXIDE REDUCTASE HEME-BINDING SUBUNIT MSRQ"/>
    <property type="match status" value="1"/>
</dbReference>
<dbReference type="Pfam" id="PF01794">
    <property type="entry name" value="Ferric_reduct"/>
    <property type="match status" value="1"/>
</dbReference>
<organism>
    <name type="scientific">Yersinia pseudotuberculosis serotype O:3 (strain YPIII)</name>
    <dbReference type="NCBI Taxonomy" id="502800"/>
    <lineage>
        <taxon>Bacteria</taxon>
        <taxon>Pseudomonadati</taxon>
        <taxon>Pseudomonadota</taxon>
        <taxon>Gammaproteobacteria</taxon>
        <taxon>Enterobacterales</taxon>
        <taxon>Yersiniaceae</taxon>
        <taxon>Yersinia</taxon>
    </lineage>
</organism>
<comment type="function">
    <text evidence="1">Part of the MsrPQ system that repairs oxidized periplasmic proteins containing methionine sulfoxide residues (Met-O), using respiratory chain electrons. Thus protects these proteins from oxidative-stress damage caused by reactive species of oxygen and chlorine generated by the host defense mechanisms. MsrPQ is essential for the maintenance of envelope integrity under bleach stress, rescuing a wide series of structurally unrelated periplasmic proteins from methionine oxidation. MsrQ provides electrons for reduction to the reductase catalytic subunit MsrP, using the quinone pool of the respiratory chain.</text>
</comment>
<comment type="cofactor">
    <cofactor evidence="1">
        <name>FMN</name>
        <dbReference type="ChEBI" id="CHEBI:58210"/>
    </cofactor>
    <text evidence="1">Binds 1 FMN per subunit.</text>
</comment>
<comment type="cofactor">
    <cofactor evidence="1">
        <name>heme b</name>
        <dbReference type="ChEBI" id="CHEBI:60344"/>
    </cofactor>
    <text evidence="1">Binds 1 heme b (iron(II)-protoporphyrin IX) group per subunit.</text>
</comment>
<comment type="subunit">
    <text evidence="1">Heterodimer of a catalytic subunit (MsrP) and a heme-binding subunit (MsrQ).</text>
</comment>
<comment type="subcellular location">
    <subcellularLocation>
        <location evidence="1">Cell inner membrane</location>
        <topology evidence="1">Multi-pass membrane protein</topology>
    </subcellularLocation>
</comment>
<comment type="similarity">
    <text evidence="1">Belongs to the MsrQ family.</text>
</comment>
<evidence type="ECO:0000255" key="1">
    <source>
        <dbReference type="HAMAP-Rule" id="MF_01207"/>
    </source>
</evidence>
<proteinExistence type="inferred from homology"/>